<proteinExistence type="evidence at protein level"/>
<gene>
    <name evidence="11" type="primary">dyc-1</name>
    <name evidence="11" type="ORF">C33G3.1</name>
</gene>
<organism>
    <name type="scientific">Caenorhabditis elegans</name>
    <dbReference type="NCBI Taxonomy" id="6239"/>
    <lineage>
        <taxon>Eukaryota</taxon>
        <taxon>Metazoa</taxon>
        <taxon>Ecdysozoa</taxon>
        <taxon>Nematoda</taxon>
        <taxon>Chromadorea</taxon>
        <taxon>Rhabditida</taxon>
        <taxon>Rhabditina</taxon>
        <taxon>Rhabditomorpha</taxon>
        <taxon>Rhabditoidea</taxon>
        <taxon>Rhabditidae</taxon>
        <taxon>Peloderinae</taxon>
        <taxon>Caenorhabditis</taxon>
    </lineage>
</organism>
<feature type="chain" id="PRO_0000086881" description="Dystrophin-like protein 1">
    <location>
        <begin position="1"/>
        <end position="887"/>
    </location>
</feature>
<feature type="domain" description="PID" evidence="2">
    <location>
        <begin position="30"/>
        <end position="197"/>
    </location>
</feature>
<feature type="region of interest" description="Disordered" evidence="3">
    <location>
        <begin position="176"/>
        <end position="254"/>
    </location>
</feature>
<feature type="region of interest" description="Disordered" evidence="3">
    <location>
        <begin position="506"/>
        <end position="606"/>
    </location>
</feature>
<feature type="region of interest" description="Disordered" evidence="3">
    <location>
        <begin position="641"/>
        <end position="753"/>
    </location>
</feature>
<feature type="region of interest" description="Disordered" evidence="3">
    <location>
        <begin position="804"/>
        <end position="839"/>
    </location>
</feature>
<feature type="region of interest" description="Disordered" evidence="3">
    <location>
        <begin position="853"/>
        <end position="887"/>
    </location>
</feature>
<feature type="coiled-coil region" evidence="1">
    <location>
        <begin position="434"/>
        <end position="506"/>
    </location>
</feature>
<feature type="compositionally biased region" description="Basic and acidic residues" evidence="3">
    <location>
        <begin position="176"/>
        <end position="186"/>
    </location>
</feature>
<feature type="compositionally biased region" description="Basic and acidic residues" evidence="3">
    <location>
        <begin position="205"/>
        <end position="216"/>
    </location>
</feature>
<feature type="compositionally biased region" description="Polar residues" evidence="3">
    <location>
        <begin position="242"/>
        <end position="254"/>
    </location>
</feature>
<feature type="compositionally biased region" description="Low complexity" evidence="3">
    <location>
        <begin position="510"/>
        <end position="519"/>
    </location>
</feature>
<feature type="compositionally biased region" description="Basic and acidic residues" evidence="3">
    <location>
        <begin position="573"/>
        <end position="588"/>
    </location>
</feature>
<feature type="compositionally biased region" description="Polar residues" evidence="3">
    <location>
        <begin position="597"/>
        <end position="606"/>
    </location>
</feature>
<feature type="compositionally biased region" description="Polar residues" evidence="3">
    <location>
        <begin position="816"/>
        <end position="827"/>
    </location>
</feature>
<feature type="compositionally biased region" description="Polar residues" evidence="3">
    <location>
        <begin position="863"/>
        <end position="887"/>
    </location>
</feature>
<feature type="splice variant" id="VSP_051611" description="In isoform a." evidence="6 8">
    <location>
        <begin position="1"/>
        <end position="94"/>
    </location>
</feature>
<feature type="splice variant" id="VSP_051612" description="In isoform a." evidence="6 8">
    <original>KEKGLSWDESKLLVMFHPIYRIFYVSHDSQDLQIFSYIARDGASNTFKCNVFKCSKK</original>
    <variation>MIRFDPDESSEMSEEKRFYYLRLMAKPGGKPIKTKFVTWSRDEDVASASNISDQQLE</variation>
    <location>
        <begin position="95"/>
        <end position="151"/>
    </location>
</feature>
<sequence>MPVRKKHGPYDIIADDVYDCRIPLHNELAYQHGIHFEAKYVGSMEIPRPGTRIEIVAAMRRVRYEFKARGIKKRPVDITVSVDGVKVVLQRKKQKEKGLSWDESKLLVMFHPIYRIFYVSHDSQDLQIFSYIARDGASNTFKCNVFKCSKKSQAMRVVRTIGQAFEVCHKVAQDQMQEKHEDEAAKSKISMQSEDEAGPNALDVIEERGGREEDSRSSSPMEAPPVGGPLYGKRLSLFQPRKPSTTSSSGGTAIDTTAIPENVLEIPNTSHPILQPKAPELVPQLQPQTALPYQQKPQSLLNIQQQQFNTLPSQMPSTQTLPSLSENPGQSHIPRMMTMPPNMPYPTATLPHPRTWAPQIPSYPNSMQSLEQNVPMYYPQMPGMLPSSSSLPFGLSSPVMVSPYATLQLNMQSQQLDQPDHSGSQITMDQYNQQLMRSQLDQAQQSVQVAGCQVQLLRDQLTSETTARLEAQSRTHQLLSANRDLLEQVQNLVSRLQMLETKITSEIHHSSSQPPQHQPIYQPSTSTPLNPKMPLSIDHNDPRIPGNSSIRLNYPYQVQPLADLRAGSLPPVKESKERRKDEGTRTEPESNAEDTTDYSSSDQYERTSNVMKPSHFNILMSNPLVDINVPSGAAMSSRMEQFDMGDTPGTSSTPPKKEKKPSSGILRGENFSRMSFNPKLGREKEREQQQLMFEDTLEDDSPRSIPPSPPSKARNTTIDSLFKPQDDPPTIADREPQQLPPQPSQQNQKKNTAVNLLMPTMPASSSLVTAMYPPMRQPAVPVNKIQPKVDVFRKKTLKTLSMDIAEEPEPSEMDPNRNNLPSSTNSSMKRRGFLPPPNTDVEIKEIEDYINRNVDRSKLPETSLLTRLTRQAQGDNSLGNLPNGYPQ</sequence>
<evidence type="ECO:0000255" key="1"/>
<evidence type="ECO:0000255" key="2">
    <source>
        <dbReference type="PROSITE-ProRule" id="PRU00148"/>
    </source>
</evidence>
<evidence type="ECO:0000256" key="3">
    <source>
        <dbReference type="SAM" id="MobiDB-lite"/>
    </source>
</evidence>
<evidence type="ECO:0000269" key="4">
    <source>
    </source>
</evidence>
<evidence type="ECO:0000269" key="5">
    <source>
    </source>
</evidence>
<evidence type="ECO:0000303" key="6">
    <source>
    </source>
</evidence>
<evidence type="ECO:0000303" key="7">
    <source>
    </source>
</evidence>
<evidence type="ECO:0000303" key="8">
    <source>
    </source>
</evidence>
<evidence type="ECO:0000305" key="9"/>
<evidence type="ECO:0000312" key="10">
    <source>
        <dbReference type="EMBL" id="CAB44432.1"/>
    </source>
</evidence>
<evidence type="ECO:0000312" key="11">
    <source>
        <dbReference type="WormBase" id="C33G3.1b"/>
    </source>
</evidence>
<accession>Q8STF6</accession>
<accession>Q93325</accession>
<accession>Q9XZQ6</accession>
<dbReference type="EMBL" id="AJ133838">
    <property type="protein sequence ID" value="CAB44432.1"/>
    <property type="molecule type" value="mRNA"/>
</dbReference>
<dbReference type="EMBL" id="Z78540">
    <property type="protein sequence ID" value="CAB01738.2"/>
    <property type="molecule type" value="Genomic_DNA"/>
</dbReference>
<dbReference type="EMBL" id="Z78540">
    <property type="protein sequence ID" value="CAD30431.1"/>
    <property type="molecule type" value="Genomic_DNA"/>
</dbReference>
<dbReference type="EMBL" id="Z72501">
    <property type="protein sequence ID" value="CAD30431.1"/>
    <property type="status" value="JOINED"/>
    <property type="molecule type" value="Genomic_DNA"/>
</dbReference>
<dbReference type="PIR" id="T19690">
    <property type="entry name" value="T19690"/>
</dbReference>
<dbReference type="RefSeq" id="NP_001024439.1">
    <molecule id="Q8STF6-1"/>
    <property type="nucleotide sequence ID" value="NM_001029268.6"/>
</dbReference>
<dbReference type="RefSeq" id="NP_741925.2">
    <molecule id="Q8STF6-2"/>
    <property type="nucleotide sequence ID" value="NM_171796.3"/>
</dbReference>
<dbReference type="SMR" id="Q8STF6"/>
<dbReference type="BioGRID" id="46414">
    <property type="interactions" value="6"/>
</dbReference>
<dbReference type="DIP" id="DIP-24627N"/>
<dbReference type="FunCoup" id="Q8STF6">
    <property type="interactions" value="1072"/>
</dbReference>
<dbReference type="IntAct" id="Q8STF6">
    <property type="interactions" value="4"/>
</dbReference>
<dbReference type="STRING" id="6239.C33G3.1b.1"/>
<dbReference type="PaxDb" id="6239-C33G3.1b.1"/>
<dbReference type="PeptideAtlas" id="Q8STF6"/>
<dbReference type="EnsemblMetazoa" id="C33G3.1a.1">
    <molecule id="Q8STF6-2"/>
    <property type="protein sequence ID" value="C33G3.1a.1"/>
    <property type="gene ID" value="WBGene00001116"/>
</dbReference>
<dbReference type="EnsemblMetazoa" id="C33G3.1b.1">
    <molecule id="Q8STF6-1"/>
    <property type="protein sequence ID" value="C33G3.1b.1"/>
    <property type="gene ID" value="WBGene00001116"/>
</dbReference>
<dbReference type="EnsemblMetazoa" id="C33G3.1b.2">
    <molecule id="Q8STF6-1"/>
    <property type="protein sequence ID" value="C33G3.1b.2"/>
    <property type="gene ID" value="WBGene00001116"/>
</dbReference>
<dbReference type="GeneID" id="181515"/>
<dbReference type="KEGG" id="cel:CELE_C33G3.1"/>
<dbReference type="UCSC" id="C33G3.1b.2">
    <molecule id="Q8STF6-1"/>
    <property type="organism name" value="c. elegans"/>
</dbReference>
<dbReference type="AGR" id="WB:WBGene00001116"/>
<dbReference type="CTD" id="181515"/>
<dbReference type="WormBase" id="C33G3.1a">
    <molecule id="Q8STF6-2"/>
    <property type="protein sequence ID" value="CE24825"/>
    <property type="gene ID" value="WBGene00001116"/>
    <property type="gene designation" value="dyc-1"/>
</dbReference>
<dbReference type="WormBase" id="C33G3.1b">
    <molecule id="Q8STF6-1"/>
    <property type="protein sequence ID" value="CE30500"/>
    <property type="gene ID" value="WBGene00001116"/>
    <property type="gene designation" value="dyc-1"/>
</dbReference>
<dbReference type="eggNOG" id="KOG4458">
    <property type="taxonomic scope" value="Eukaryota"/>
</dbReference>
<dbReference type="eggNOG" id="KOG4815">
    <property type="taxonomic scope" value="Eukaryota"/>
</dbReference>
<dbReference type="GeneTree" id="ENSGT00940000169335"/>
<dbReference type="InParanoid" id="Q8STF6"/>
<dbReference type="OMA" id="FSRMSFN"/>
<dbReference type="OrthoDB" id="10030336at2759"/>
<dbReference type="PhylomeDB" id="Q8STF6"/>
<dbReference type="SignaLink" id="Q8STF6"/>
<dbReference type="PRO" id="PR:Q8STF6"/>
<dbReference type="Proteomes" id="UP000001940">
    <property type="component" value="Chromosome X"/>
</dbReference>
<dbReference type="Bgee" id="WBGene00001116">
    <property type="expression patterns" value="Expressed in larva and 3 other cell types or tissues"/>
</dbReference>
<dbReference type="GO" id="GO:0030424">
    <property type="term" value="C:axon"/>
    <property type="evidence" value="ECO:0000314"/>
    <property type="project" value="WormBase"/>
</dbReference>
<dbReference type="GO" id="GO:0016010">
    <property type="term" value="C:dystrophin-associated glycoprotein complex"/>
    <property type="evidence" value="ECO:0000316"/>
    <property type="project" value="UniProtKB"/>
</dbReference>
<dbReference type="GO" id="GO:0055120">
    <property type="term" value="C:striated muscle dense body"/>
    <property type="evidence" value="ECO:0000314"/>
    <property type="project" value="WormBase"/>
</dbReference>
<dbReference type="GO" id="GO:0050998">
    <property type="term" value="F:nitric-oxide synthase binding"/>
    <property type="evidence" value="ECO:0000318"/>
    <property type="project" value="GO_Central"/>
</dbReference>
<dbReference type="GO" id="GO:0030235">
    <property type="term" value="F:nitric-oxide synthase regulator activity"/>
    <property type="evidence" value="ECO:0000303"/>
    <property type="project" value="UniProtKB"/>
</dbReference>
<dbReference type="GO" id="GO:0008307">
    <property type="term" value="F:structural constituent of muscle"/>
    <property type="evidence" value="ECO:0000314"/>
    <property type="project" value="WormBase"/>
</dbReference>
<dbReference type="GO" id="GO:0007626">
    <property type="term" value="P:locomotory behavior"/>
    <property type="evidence" value="ECO:0000315"/>
    <property type="project" value="WormBase"/>
</dbReference>
<dbReference type="GO" id="GO:0046716">
    <property type="term" value="P:muscle cell cellular homeostasis"/>
    <property type="evidence" value="ECO:0000315"/>
    <property type="project" value="UniProtKB"/>
</dbReference>
<dbReference type="GO" id="GO:0040017">
    <property type="term" value="P:positive regulation of locomotion"/>
    <property type="evidence" value="ECO:0000315"/>
    <property type="project" value="UniProtKB"/>
</dbReference>
<dbReference type="GO" id="GO:0046662">
    <property type="term" value="P:regulation of egg-laying behavior"/>
    <property type="evidence" value="ECO:0000315"/>
    <property type="project" value="UniProtKB"/>
</dbReference>
<dbReference type="GO" id="GO:0045214">
    <property type="term" value="P:sarcomere organization"/>
    <property type="evidence" value="ECO:0000316"/>
    <property type="project" value="WormBase"/>
</dbReference>
<dbReference type="CDD" id="cd01270">
    <property type="entry name" value="PTB_CAPON-like"/>
    <property type="match status" value="1"/>
</dbReference>
<dbReference type="FunFam" id="2.30.29.30:FF:000124">
    <property type="entry name" value="carboxyl-terminal PDZ ligand of neuronal nitric oxide synthase protein-like"/>
    <property type="match status" value="1"/>
</dbReference>
<dbReference type="Gene3D" id="2.30.29.30">
    <property type="entry name" value="Pleckstrin-homology domain (PH domain)/Phosphotyrosine-binding domain (PTB)"/>
    <property type="match status" value="1"/>
</dbReference>
<dbReference type="InterPro" id="IPR051133">
    <property type="entry name" value="Adapter_Engulfment-Domain"/>
</dbReference>
<dbReference type="InterPro" id="IPR011993">
    <property type="entry name" value="PH-like_dom_sf"/>
</dbReference>
<dbReference type="InterPro" id="IPR006020">
    <property type="entry name" value="PTB/PI_dom"/>
</dbReference>
<dbReference type="PANTHER" id="PTHR11232:SF17">
    <property type="entry name" value="CAPON-LIKE PROTEIN"/>
    <property type="match status" value="1"/>
</dbReference>
<dbReference type="PANTHER" id="PTHR11232">
    <property type="entry name" value="PHOSPHOTYROSINE INTERACTION DOMAIN-CONTAINING FAMILY MEMBER"/>
    <property type="match status" value="1"/>
</dbReference>
<dbReference type="Pfam" id="PF00640">
    <property type="entry name" value="PID"/>
    <property type="match status" value="1"/>
</dbReference>
<dbReference type="SMART" id="SM00462">
    <property type="entry name" value="PTB"/>
    <property type="match status" value="1"/>
</dbReference>
<dbReference type="SUPFAM" id="SSF50729">
    <property type="entry name" value="PH domain-like"/>
    <property type="match status" value="1"/>
</dbReference>
<dbReference type="PROSITE" id="PS01179">
    <property type="entry name" value="PID"/>
    <property type="match status" value="1"/>
</dbReference>
<protein>
    <recommendedName>
        <fullName>Dystrophin-like protein 1</fullName>
    </recommendedName>
    <alternativeName>
        <fullName>Dyb-1-binding and CAPON-related protein</fullName>
    </alternativeName>
</protein>
<keyword id="KW-0025">Alternative splicing</keyword>
<keyword id="KW-0175">Coiled coil</keyword>
<keyword id="KW-1185">Reference proteome</keyword>
<name>DYC1_CAEEL</name>
<reference evidence="9 10" key="1">
    <citation type="journal article" date="2000" name="Curr. Biol.">
        <title>Genetic suppression of phenotypes arising from mutations in dystrophin-related genes in Caenorhabditis elegans.</title>
        <authorList>
            <person name="Gieseler K."/>
            <person name="Grisoni K."/>
            <person name="Segalat L."/>
        </authorList>
    </citation>
    <scope>NUCLEOTIDE SEQUENCE [MRNA] (ISOFORM A)</scope>
    <scope>FUNCTION</scope>
    <scope>TISSUE SPECIFICITY</scope>
    <scope>DISRUPTION PHENOTYPE</scope>
    <source>
        <strain evidence="10">Bristol N2</strain>
    </source>
</reference>
<reference key="2">
    <citation type="journal article" date="1998" name="Science">
        <title>Genome sequence of the nematode C. elegans: a platform for investigating biology.</title>
        <authorList>
            <consortium name="The C. elegans sequencing consortium"/>
        </authorList>
    </citation>
    <scope>NUCLEOTIDE SEQUENCE [LARGE SCALE GENOMIC DNA]</scope>
    <scope>ALTERNATIVE SPLICING</scope>
    <source>
        <strain>Bristol N2</strain>
    </source>
</reference>
<reference key="3">
    <citation type="journal article" date="2008" name="Mol. Biol. Cell">
        <title>DYC-1, a protein functionally linked to dystrophin in Caenorhabditis elegans is associated with the dense body, where it interacts with the muscle LIM domain protein ZYX-1.</title>
        <authorList>
            <person name="Lecroisey C."/>
            <person name="Martin E."/>
            <person name="Mariol M.C."/>
            <person name="Granger L."/>
            <person name="Schwab Y."/>
            <person name="Labouesse M."/>
            <person name="Segalat L."/>
            <person name="Gieseler K."/>
        </authorList>
    </citation>
    <scope>TISSUE SPECIFICITY</scope>
    <scope>DISRUPTION PHENOTYPE</scope>
    <scope>INTERACTION WITH ZYX-1</scope>
</reference>
<comment type="function">
    <text evidence="4">Together with dys-1 and hlh-1, participates in a common muscular function.</text>
</comment>
<comment type="subunit">
    <text evidence="5 6 9">Component of the dystrophin glycoprotein complex (DGC) (PubMed:10996789). Interacts with zyx-1 (PubMed:18094057).</text>
</comment>
<comment type="alternative products">
    <event type="alternative splicing"/>
    <isoform>
        <id>Q8STF6-1</id>
        <name evidence="8">b</name>
        <name evidence="7">DYC-1S</name>
        <sequence type="displayed"/>
    </isoform>
    <isoform>
        <id>Q8STF6-2</id>
        <name evidence="4">a</name>
        <name evidence="7">DYC-1L</name>
        <sequence type="described" ref="VSP_051611 VSP_051612"/>
    </isoform>
</comment>
<comment type="tissue specificity">
    <text evidence="4 5">Expressed in muscles of the head, body wall and vulva (PubMed:10996789, PubMed:18094057). In some animals, weaker expression is observed in the intestinal muscles (at protein level) (PubMed:10996789). Isoform a is expressed in lateral neurons SDQL and SDQR (PubMed:18094057).</text>
</comment>
<comment type="disruption phenotype">
    <text evidence="4 5">Mutants synergistically exhibit progressive myopathy. Overexpression of dyc-1 in dys-1 and hlh-1 double mutants, delays but does not prevent the progression of myopathy due to reduction in the proportion of abnormal muscles (PubMed:10996789). Also, reduces the locomotion and egg laying defects (PubMed:10996789). RNAi-mediated knock-down of isoform b induces a dys-1-like behavioral phenotype consisting of hyperactivity, exagerated head bending and a tendency to hypercontract (PubMed:18094057).</text>
</comment>